<feature type="chain" id="PRO_1000051491" description="4-hydroxythreonine-4-phosphate dehydrogenase">
    <location>
        <begin position="1"/>
        <end position="364"/>
    </location>
</feature>
<feature type="binding site" evidence="1">
    <location>
        <position position="138"/>
    </location>
    <ligand>
        <name>substrate</name>
    </ligand>
</feature>
<feature type="binding site" evidence="1">
    <location>
        <position position="139"/>
    </location>
    <ligand>
        <name>substrate</name>
    </ligand>
</feature>
<feature type="binding site" evidence="1">
    <location>
        <position position="169"/>
    </location>
    <ligand>
        <name>a divalent metal cation</name>
        <dbReference type="ChEBI" id="CHEBI:60240"/>
        <note>ligand shared between dimeric partners</note>
    </ligand>
</feature>
<feature type="binding site" evidence="1">
    <location>
        <position position="214"/>
    </location>
    <ligand>
        <name>a divalent metal cation</name>
        <dbReference type="ChEBI" id="CHEBI:60240"/>
        <note>ligand shared between dimeric partners</note>
    </ligand>
</feature>
<feature type="binding site" evidence="1">
    <location>
        <position position="269"/>
    </location>
    <ligand>
        <name>a divalent metal cation</name>
        <dbReference type="ChEBI" id="CHEBI:60240"/>
        <note>ligand shared between dimeric partners</note>
    </ligand>
</feature>
<feature type="binding site" evidence="1">
    <location>
        <position position="277"/>
    </location>
    <ligand>
        <name>substrate</name>
    </ligand>
</feature>
<feature type="binding site" evidence="1">
    <location>
        <position position="286"/>
    </location>
    <ligand>
        <name>substrate</name>
    </ligand>
</feature>
<feature type="binding site" evidence="1">
    <location>
        <position position="295"/>
    </location>
    <ligand>
        <name>substrate</name>
    </ligand>
</feature>
<name>PDXA_BACTN</name>
<accession>Q89ZK3</accession>
<evidence type="ECO:0000250" key="1">
    <source>
        <dbReference type="UniProtKB" id="P19624"/>
    </source>
</evidence>
<evidence type="ECO:0000305" key="2"/>
<protein>
    <recommendedName>
        <fullName evidence="1">4-hydroxythreonine-4-phosphate dehydrogenase</fullName>
        <ecNumber evidence="1">1.1.1.262</ecNumber>
    </recommendedName>
    <alternativeName>
        <fullName evidence="1">4-(phosphohydroxy)-L-threonine dehydrogenase</fullName>
    </alternativeName>
</protein>
<dbReference type="EC" id="1.1.1.262" evidence="1"/>
<dbReference type="EMBL" id="AE015928">
    <property type="protein sequence ID" value="AAO79479.1"/>
    <property type="molecule type" value="Genomic_DNA"/>
</dbReference>
<dbReference type="RefSeq" id="NP_813285.1">
    <property type="nucleotide sequence ID" value="NC_004663.1"/>
</dbReference>
<dbReference type="RefSeq" id="WP_008760044.1">
    <property type="nucleotide sequence ID" value="NC_004663.1"/>
</dbReference>
<dbReference type="SMR" id="Q89ZK3"/>
<dbReference type="FunCoup" id="Q89ZK3">
    <property type="interactions" value="272"/>
</dbReference>
<dbReference type="STRING" id="226186.BT_4374"/>
<dbReference type="PaxDb" id="226186-BT_4374"/>
<dbReference type="EnsemblBacteria" id="AAO79479">
    <property type="protein sequence ID" value="AAO79479"/>
    <property type="gene ID" value="BT_4374"/>
</dbReference>
<dbReference type="GeneID" id="60925550"/>
<dbReference type="KEGG" id="bth:BT_4374"/>
<dbReference type="PATRIC" id="fig|226186.12.peg.4451"/>
<dbReference type="eggNOG" id="COG1995">
    <property type="taxonomic scope" value="Bacteria"/>
</dbReference>
<dbReference type="HOGENOM" id="CLU_040168_4_0_10"/>
<dbReference type="InParanoid" id="Q89ZK3"/>
<dbReference type="OrthoDB" id="9801783at2"/>
<dbReference type="UniPathway" id="UPA00244">
    <property type="reaction ID" value="UER00312"/>
</dbReference>
<dbReference type="Proteomes" id="UP000001414">
    <property type="component" value="Chromosome"/>
</dbReference>
<dbReference type="GO" id="GO:0005737">
    <property type="term" value="C:cytoplasm"/>
    <property type="evidence" value="ECO:0007669"/>
    <property type="project" value="UniProtKB-SubCell"/>
</dbReference>
<dbReference type="GO" id="GO:0050570">
    <property type="term" value="F:4-hydroxythreonine-4-phosphate dehydrogenase activity"/>
    <property type="evidence" value="ECO:0007669"/>
    <property type="project" value="UniProtKB-EC"/>
</dbReference>
<dbReference type="GO" id="GO:0046872">
    <property type="term" value="F:metal ion binding"/>
    <property type="evidence" value="ECO:0007669"/>
    <property type="project" value="UniProtKB-KW"/>
</dbReference>
<dbReference type="GO" id="GO:0051287">
    <property type="term" value="F:NAD binding"/>
    <property type="evidence" value="ECO:0007669"/>
    <property type="project" value="InterPro"/>
</dbReference>
<dbReference type="GO" id="GO:0008615">
    <property type="term" value="P:pyridoxine biosynthetic process"/>
    <property type="evidence" value="ECO:0007669"/>
    <property type="project" value="UniProtKB-KW"/>
</dbReference>
<dbReference type="Gene3D" id="3.40.718.10">
    <property type="entry name" value="Isopropylmalate Dehydrogenase"/>
    <property type="match status" value="1"/>
</dbReference>
<dbReference type="InterPro" id="IPR005255">
    <property type="entry name" value="PdxA_fam"/>
</dbReference>
<dbReference type="NCBIfam" id="TIGR00557">
    <property type="entry name" value="pdxA"/>
    <property type="match status" value="1"/>
</dbReference>
<dbReference type="PANTHER" id="PTHR30004">
    <property type="entry name" value="4-HYDROXYTHREONINE-4-PHOSPHATE DEHYDROGENASE"/>
    <property type="match status" value="1"/>
</dbReference>
<dbReference type="PANTHER" id="PTHR30004:SF6">
    <property type="entry name" value="D-THREONATE 4-PHOSPHATE DEHYDROGENASE"/>
    <property type="match status" value="1"/>
</dbReference>
<dbReference type="Pfam" id="PF04166">
    <property type="entry name" value="PdxA"/>
    <property type="match status" value="1"/>
</dbReference>
<dbReference type="SUPFAM" id="SSF53659">
    <property type="entry name" value="Isocitrate/Isopropylmalate dehydrogenase-like"/>
    <property type="match status" value="1"/>
</dbReference>
<gene>
    <name evidence="1" type="primary">pdxA</name>
    <name type="ordered locus">BT_4374</name>
</gene>
<reference key="1">
    <citation type="journal article" date="2003" name="Science">
        <title>A genomic view of the human-Bacteroides thetaiotaomicron symbiosis.</title>
        <authorList>
            <person name="Xu J."/>
            <person name="Bjursell M.K."/>
            <person name="Himrod J."/>
            <person name="Deng S."/>
            <person name="Carmichael L.K."/>
            <person name="Chiang H.C."/>
            <person name="Hooper L.V."/>
            <person name="Gordon J.I."/>
        </authorList>
    </citation>
    <scope>NUCLEOTIDE SEQUENCE [LARGE SCALE GENOMIC DNA]</scope>
    <source>
        <strain>ATCC 29148 / DSM 2079 / JCM 5827 / CCUG 10774 / NCTC 10582 / VPI-5482 / E50</strain>
    </source>
</reference>
<proteinExistence type="inferred from homology"/>
<organism>
    <name type="scientific">Bacteroides thetaiotaomicron (strain ATCC 29148 / DSM 2079 / JCM 5827 / CCUG 10774 / NCTC 10582 / VPI-5482 / E50)</name>
    <dbReference type="NCBI Taxonomy" id="226186"/>
    <lineage>
        <taxon>Bacteria</taxon>
        <taxon>Pseudomonadati</taxon>
        <taxon>Bacteroidota</taxon>
        <taxon>Bacteroidia</taxon>
        <taxon>Bacteroidales</taxon>
        <taxon>Bacteroidaceae</taxon>
        <taxon>Bacteroides</taxon>
    </lineage>
</organism>
<comment type="function">
    <text evidence="1">Catalyzes the NAD(P)-dependent oxidation of 4-(phosphooxy)-L-threonine (HTP) into 2-amino-3-oxo-4-(phosphooxy)butyric acid which spontaneously decarboxylates to form 3-amino-2-oxopropyl phosphate (AHAP).</text>
</comment>
<comment type="catalytic activity">
    <reaction evidence="1">
        <text>4-(phosphooxy)-L-threonine + NAD(+) = 3-amino-2-oxopropyl phosphate + CO2 + NADH</text>
        <dbReference type="Rhea" id="RHEA:32275"/>
        <dbReference type="ChEBI" id="CHEBI:16526"/>
        <dbReference type="ChEBI" id="CHEBI:57279"/>
        <dbReference type="ChEBI" id="CHEBI:57540"/>
        <dbReference type="ChEBI" id="CHEBI:57945"/>
        <dbReference type="ChEBI" id="CHEBI:58452"/>
        <dbReference type="EC" id="1.1.1.262"/>
    </reaction>
</comment>
<comment type="cofactor">
    <cofactor evidence="1">
        <name>a divalent metal cation</name>
        <dbReference type="ChEBI" id="CHEBI:60240"/>
    </cofactor>
    <text evidence="1">Binds 1 divalent metal cation per subunit.</text>
</comment>
<comment type="pathway">
    <text evidence="1">Cofactor biosynthesis; pyridoxine 5'-phosphate biosynthesis; pyridoxine 5'-phosphate from D-erythrose 4-phosphate: step 4/5.</text>
</comment>
<comment type="subunit">
    <text evidence="1">Homodimer.</text>
</comment>
<comment type="subcellular location">
    <subcellularLocation>
        <location evidence="1">Cytoplasm</location>
    </subcellularLocation>
</comment>
<comment type="miscellaneous">
    <text evidence="1">The active site is located at the dimer interface.</text>
</comment>
<comment type="similarity">
    <text evidence="2">Belongs to the PdxA family.</text>
</comment>
<sequence length="364" mass="40325">MEENKIRIGITQGDINGVGYEVILKTFSDPTMLELCTPIIYGSPKVAAYHRKALDVQANFSIVNTASEAGYNRLSVVNCTDDEVKVEFSKPDPEAGKAALGALERAIEEYREGLIDVIVTAPINKHTIQSEEFSFPGHTEYIEERLGNGNKSLMILMKNDFRVALVTTHIPVREIATTITKELIQEKLMIFHRCLKQDFGIGAPRIAVLSLNPHAGDGGLLGMEEQEIIIPAMKEMEEKGIICYGPYAADGFMGSGNYTHFDGILAMYHDQGLAPFKALAMEDGVNYTAGLPVVRTSPAHGTAYDIAGKGLASEDSFRQAIYVAIDVFRNRQREKAARVNPLRKQYYEKRDDSDKLKLDTVDED</sequence>
<keyword id="KW-0963">Cytoplasm</keyword>
<keyword id="KW-0479">Metal-binding</keyword>
<keyword id="KW-0520">NAD</keyword>
<keyword id="KW-0521">NADP</keyword>
<keyword id="KW-0560">Oxidoreductase</keyword>
<keyword id="KW-0664">Pyridoxine biosynthesis</keyword>
<keyword id="KW-1185">Reference proteome</keyword>